<gene>
    <name type="primary">aviRb</name>
</gene>
<keyword id="KW-0002">3D-structure</keyword>
<keyword id="KW-0046">Antibiotic resistance</keyword>
<keyword id="KW-0489">Methyltransferase</keyword>
<keyword id="KW-0949">S-adenosyl-L-methionine</keyword>
<keyword id="KW-0808">Transferase</keyword>
<reference key="1">
    <citation type="journal article" date="2001" name="Antimicrob. Agents Chemother.">
        <title>An ATP-binding cassette transporter and two rRNA methyltransferases are involved in resistance to avilamycin in the producer organism Streptomyces viridochromogenes Tu57.</title>
        <authorList>
            <person name="Weitnauer G."/>
            <person name="Gaisser S."/>
            <person name="Trefzer A."/>
            <person name="Stockert S."/>
            <person name="Westrich L."/>
            <person name="Quiros L.M."/>
            <person name="Mendez C."/>
            <person name="Salas J.A."/>
            <person name="Bechthold A."/>
        </authorList>
    </citation>
    <scope>NUCLEOTIDE SEQUENCE [GENOMIC DNA]</scope>
    <scope>FUNCTION</scope>
    <source>
        <strain>Tu57</strain>
    </source>
</reference>
<reference key="2">
    <citation type="journal article" date="2003" name="Mol. Microbiol.">
        <title>The avilamycin resistance determinants AviRa and AviRb methylate 23S rRNA at the guanosine 2535 base and the uridine 2479 ribose.</title>
        <authorList>
            <person name="Treede I."/>
            <person name="Jakobsen L."/>
            <person name="Kirpekar F."/>
            <person name="Vester B."/>
            <person name="Weitnauer G."/>
            <person name="Bechthold A."/>
            <person name="Douthwaite S."/>
        </authorList>
    </citation>
    <scope>FUNCTION</scope>
    <scope>CATALYTIC ACTIVITY</scope>
    <source>
        <strain>Tu57</strain>
    </source>
</reference>
<reference key="3">
    <citation type="journal article" date="2005" name="J. Mol. Biol.">
        <title>Structure and function of the antibiotic resistance-mediating methyltransferase AviRb from Streptomyces viridochromogenes.</title>
        <authorList>
            <person name="Mosbacher T.G."/>
            <person name="Bechthold A."/>
            <person name="Schulz G.E."/>
        </authorList>
    </citation>
    <scope>X-RAY CRYSTALLOGRAPHY (2.37 ANGSTROMS) IN COMPLEX WITH S-ADENOSYL-L-METHIONINE</scope>
    <scope>SUBUNIT</scope>
    <scope>MUTAGENESIS OF THR-135; ASN-139; ARG-145; GLU-234 AND ASN-262</scope>
    <source>
        <strain>Tu57</strain>
    </source>
</reference>
<evidence type="ECO:0000269" key="1">
    <source>
    </source>
</evidence>
<evidence type="ECO:0000269" key="2">
    <source>
    </source>
</evidence>
<evidence type="ECO:0000269" key="3">
    <source>
    </source>
</evidence>
<evidence type="ECO:0000305" key="4"/>
<evidence type="ECO:0007829" key="5">
    <source>
        <dbReference type="PDB" id="1X7O"/>
    </source>
</evidence>
<evidence type="ECO:0007829" key="6">
    <source>
        <dbReference type="PDB" id="1X7P"/>
    </source>
</evidence>
<comment type="function">
    <text evidence="1 2">Specifically methylates the 2'-O-ribose position of uridine-2479 in 23S ribosomal RNA. Confers resistance to antibiotic avilamycin, an orthosomycin antibiotic.</text>
</comment>
<comment type="catalytic activity">
    <reaction evidence="2">
        <text>uridine(2479) in 23S rRNA + S-adenosyl-L-methionine = 2'-O-methyluridine(2479) in 23S rRNA + S-adenosyl-L-homocysteine + H(+)</text>
        <dbReference type="Rhea" id="RHEA:43092"/>
        <dbReference type="Rhea" id="RHEA-COMP:10335"/>
        <dbReference type="Rhea" id="RHEA-COMP:10336"/>
        <dbReference type="ChEBI" id="CHEBI:15378"/>
        <dbReference type="ChEBI" id="CHEBI:57856"/>
        <dbReference type="ChEBI" id="CHEBI:59789"/>
        <dbReference type="ChEBI" id="CHEBI:65315"/>
        <dbReference type="ChEBI" id="CHEBI:74478"/>
        <dbReference type="EC" id="2.1.1.208"/>
    </reaction>
</comment>
<comment type="subunit">
    <text evidence="3">Homodimer.</text>
</comment>
<comment type="similarity">
    <text evidence="4">Belongs to the class IV-like SAM-binding methyltransferase superfamily. RNA methyltransferase TsnR/AvirB family.</text>
</comment>
<protein>
    <recommendedName>
        <fullName>23S rRNA (uridine(2479)-2'-O)-methyltransferase</fullName>
        <ecNumber>2.1.1.208</ecNumber>
    </recommendedName>
    <alternativeName>
        <fullName>Avilamycin resistance protein B</fullName>
    </alternativeName>
</protein>
<dbReference type="EC" id="2.1.1.208"/>
<dbReference type="EMBL" id="AF333038">
    <property type="protein sequence ID" value="AAG32066.1"/>
    <property type="molecule type" value="Genomic_DNA"/>
</dbReference>
<dbReference type="PDB" id="1X7O">
    <property type="method" value="X-ray"/>
    <property type="resolution" value="2.37 A"/>
    <property type="chains" value="A/B=1-287"/>
</dbReference>
<dbReference type="PDB" id="1X7P">
    <property type="method" value="X-ray"/>
    <property type="resolution" value="2.55 A"/>
    <property type="chains" value="A/B=1-287"/>
</dbReference>
<dbReference type="PDBsum" id="1X7O"/>
<dbReference type="PDBsum" id="1X7P"/>
<dbReference type="SMR" id="Q9F5K6"/>
<dbReference type="KEGG" id="ag:AAG32066"/>
<dbReference type="BioCyc" id="MetaCyc:MONOMER-16328"/>
<dbReference type="BRENDA" id="2.1.1.208">
    <property type="organism ID" value="6116"/>
</dbReference>
<dbReference type="EvolutionaryTrace" id="Q9F5K6"/>
<dbReference type="GO" id="GO:0003723">
    <property type="term" value="F:RNA binding"/>
    <property type="evidence" value="ECO:0007669"/>
    <property type="project" value="InterPro"/>
</dbReference>
<dbReference type="GO" id="GO:0008650">
    <property type="term" value="F:rRNA (uridine-2'-O-)-methyltransferase activity"/>
    <property type="evidence" value="ECO:0000314"/>
    <property type="project" value="UniProtKB"/>
</dbReference>
<dbReference type="GO" id="GO:0032259">
    <property type="term" value="P:methylation"/>
    <property type="evidence" value="ECO:0000314"/>
    <property type="project" value="UniProtKB"/>
</dbReference>
<dbReference type="GO" id="GO:0046677">
    <property type="term" value="P:response to antibiotic"/>
    <property type="evidence" value="ECO:0000314"/>
    <property type="project" value="UniProtKB"/>
</dbReference>
<dbReference type="GO" id="GO:0031167">
    <property type="term" value="P:rRNA methylation"/>
    <property type="evidence" value="ECO:0000314"/>
    <property type="project" value="UniProtKB"/>
</dbReference>
<dbReference type="CDD" id="cd18107">
    <property type="entry name" value="SpoU-like_AviRb"/>
    <property type="match status" value="1"/>
</dbReference>
<dbReference type="Gene3D" id="3.30.1330.30">
    <property type="match status" value="1"/>
</dbReference>
<dbReference type="Gene3D" id="3.40.1280.10">
    <property type="match status" value="1"/>
</dbReference>
<dbReference type="InterPro" id="IPR029028">
    <property type="entry name" value="Alpha/beta_knot_MTases"/>
</dbReference>
<dbReference type="InterPro" id="IPR029064">
    <property type="entry name" value="Ribosomal_eL30-like_sf"/>
</dbReference>
<dbReference type="InterPro" id="IPR051259">
    <property type="entry name" value="rRNA_Methyltransferase"/>
</dbReference>
<dbReference type="InterPro" id="IPR001537">
    <property type="entry name" value="SpoU_MeTrfase"/>
</dbReference>
<dbReference type="InterPro" id="IPR054578">
    <property type="entry name" value="SpoU_sub_bind-like_N"/>
</dbReference>
<dbReference type="InterPro" id="IPR029026">
    <property type="entry name" value="tRNA_m1G_MTases_N"/>
</dbReference>
<dbReference type="PANTHER" id="PTHR43191">
    <property type="entry name" value="RRNA METHYLTRANSFERASE 3"/>
    <property type="match status" value="1"/>
</dbReference>
<dbReference type="PANTHER" id="PTHR43191:SF2">
    <property type="entry name" value="RRNA METHYLTRANSFERASE 3, MITOCHONDRIAL"/>
    <property type="match status" value="1"/>
</dbReference>
<dbReference type="Pfam" id="PF00588">
    <property type="entry name" value="SpoU_methylase"/>
    <property type="match status" value="1"/>
</dbReference>
<dbReference type="Pfam" id="PF22655">
    <property type="entry name" value="SpoU_sub_bind_like"/>
    <property type="match status" value="1"/>
</dbReference>
<dbReference type="SUPFAM" id="SSF75217">
    <property type="entry name" value="alpha/beta knot"/>
    <property type="match status" value="1"/>
</dbReference>
<dbReference type="SUPFAM" id="SSF55315">
    <property type="entry name" value="L30e-like"/>
    <property type="match status" value="1"/>
</dbReference>
<accession>Q9F5K6</accession>
<sequence length="287" mass="31215">MARSRGERTPAARRITSRNARFQQWQALLGNRNKRTRAGEFLVMGVRPISLAVEHGWPVRTLLYDGQRELSKWARELLRTVRTEQIAMAPDLLMELGEKNEAPPEVVAVVEMPADDLDRIPVREDFLGVLFDRPTSPGNIGSIIRSADALGAHGLIVAGHAADVYDPKSVRSSTGSLFSLPAVRVPSPGEVMDWVEARRAAGTPIVLVGTDEHGDCDVFDFDFTQPTLLLIGNETAGLSNAWRTLCDYTVSIPMAGSASSLNAANAATAILYEAVRQRISGRTATTP</sequence>
<proteinExistence type="evidence at protein level"/>
<name>AVRB_STRVR</name>
<feature type="chain" id="PRO_0000418461" description="23S rRNA (uridine(2479)-2'-O)-methyltransferase">
    <location>
        <begin position="1"/>
        <end position="287"/>
    </location>
</feature>
<feature type="binding site">
    <location>
        <begin position="210"/>
        <end position="211"/>
    </location>
    <ligand>
        <name>S-adenosyl-L-methionine</name>
        <dbReference type="ChEBI" id="CHEBI:59789"/>
    </ligand>
</feature>
<feature type="binding site" evidence="3">
    <location>
        <position position="232"/>
    </location>
    <ligand>
        <name>S-adenosyl-L-methionine</name>
        <dbReference type="ChEBI" id="CHEBI:59789"/>
    </ligand>
</feature>
<feature type="binding site">
    <location>
        <begin position="252"/>
        <end position="254"/>
    </location>
    <ligand>
        <name>S-adenosyl-L-methionine</name>
        <dbReference type="ChEBI" id="CHEBI:59789"/>
    </ligand>
</feature>
<feature type="mutagenesis site" description="Slightly increases catalytic activity." evidence="3">
    <original>T</original>
    <variation>V</variation>
    <location>
        <position position="135"/>
    </location>
</feature>
<feature type="mutagenesis site" description="Almost abolishes catalytic activity." evidence="3">
    <original>N</original>
    <variation>A</variation>
    <location>
        <position position="139"/>
    </location>
</feature>
<feature type="mutagenesis site" description="Almost abolishes catalytic activity." evidence="3">
    <original>R</original>
    <variation>A</variation>
    <location>
        <position position="145"/>
    </location>
</feature>
<feature type="mutagenesis site" description="Strongly impairs catalytic activity." evidence="3">
    <original>E</original>
    <variation>A</variation>
    <location>
        <position position="234"/>
    </location>
</feature>
<feature type="mutagenesis site" description="Slightly impairs catalytic activity." evidence="3">
    <original>E</original>
    <variation>Q</variation>
    <location>
        <position position="234"/>
    </location>
</feature>
<feature type="mutagenesis site" description="Almost abolishes catalytic activity." evidence="3">
    <original>N</original>
    <variation>A</variation>
    <location>
        <position position="262"/>
    </location>
</feature>
<feature type="mutagenesis site" description="Slightly impairs catalytic activity." evidence="3">
    <original>N</original>
    <variation>Q</variation>
    <location>
        <position position="262"/>
    </location>
</feature>
<feature type="helix" evidence="5">
    <location>
        <begin position="20"/>
        <end position="27"/>
    </location>
</feature>
<feature type="helix" evidence="5">
    <location>
        <begin position="32"/>
        <end position="38"/>
    </location>
</feature>
<feature type="strand" evidence="5">
    <location>
        <begin position="40"/>
        <end position="45"/>
    </location>
</feature>
<feature type="helix" evidence="5">
    <location>
        <begin position="46"/>
        <end position="54"/>
    </location>
</feature>
<feature type="strand" evidence="5">
    <location>
        <begin position="59"/>
        <end position="67"/>
    </location>
</feature>
<feature type="helix" evidence="5">
    <location>
        <begin position="72"/>
        <end position="80"/>
    </location>
</feature>
<feature type="strand" evidence="5">
    <location>
        <begin position="83"/>
        <end position="88"/>
    </location>
</feature>
<feature type="helix" evidence="5">
    <location>
        <begin position="90"/>
        <end position="93"/>
    </location>
</feature>
<feature type="strand" evidence="6">
    <location>
        <begin position="95"/>
        <end position="97"/>
    </location>
</feature>
<feature type="strand" evidence="5">
    <location>
        <begin position="99"/>
        <end position="101"/>
    </location>
</feature>
<feature type="strand" evidence="5">
    <location>
        <begin position="105"/>
        <end position="111"/>
    </location>
</feature>
<feature type="helix" evidence="5">
    <location>
        <begin position="117"/>
        <end position="119"/>
    </location>
</feature>
<feature type="strand" evidence="5">
    <location>
        <begin position="127"/>
        <end position="133"/>
    </location>
</feature>
<feature type="helix" evidence="5">
    <location>
        <begin position="137"/>
        <end position="149"/>
    </location>
</feature>
<feature type="strand" evidence="5">
    <location>
        <begin position="154"/>
        <end position="162"/>
    </location>
</feature>
<feature type="helix" evidence="5">
    <location>
        <begin position="167"/>
        <end position="172"/>
    </location>
</feature>
<feature type="turn" evidence="5">
    <location>
        <begin position="173"/>
        <end position="175"/>
    </location>
</feature>
<feature type="helix" evidence="5">
    <location>
        <begin position="176"/>
        <end position="178"/>
    </location>
</feature>
<feature type="strand" evidence="5">
    <location>
        <begin position="182"/>
        <end position="187"/>
    </location>
</feature>
<feature type="helix" evidence="5">
    <location>
        <begin position="188"/>
        <end position="201"/>
    </location>
</feature>
<feature type="strand" evidence="5">
    <location>
        <begin position="206"/>
        <end position="210"/>
    </location>
</feature>
<feature type="strand" evidence="5">
    <location>
        <begin position="215"/>
        <end position="217"/>
    </location>
</feature>
<feature type="helix" evidence="5">
    <location>
        <begin position="218"/>
        <end position="220"/>
    </location>
</feature>
<feature type="strand" evidence="5">
    <location>
        <begin position="227"/>
        <end position="231"/>
    </location>
</feature>
<feature type="turn" evidence="5">
    <location>
        <begin position="234"/>
        <end position="236"/>
    </location>
</feature>
<feature type="helix" evidence="5">
    <location>
        <begin position="240"/>
        <end position="245"/>
    </location>
</feature>
<feature type="strand" evidence="5">
    <location>
        <begin position="247"/>
        <end position="251"/>
    </location>
</feature>
<feature type="strand" evidence="5">
    <location>
        <begin position="255"/>
        <end position="258"/>
    </location>
</feature>
<feature type="helix" evidence="5">
    <location>
        <begin position="263"/>
        <end position="278"/>
    </location>
</feature>
<organism>
    <name type="scientific">Streptomyces viridochromogenes</name>
    <dbReference type="NCBI Taxonomy" id="1938"/>
    <lineage>
        <taxon>Bacteria</taxon>
        <taxon>Bacillati</taxon>
        <taxon>Actinomycetota</taxon>
        <taxon>Actinomycetes</taxon>
        <taxon>Kitasatosporales</taxon>
        <taxon>Streptomycetaceae</taxon>
        <taxon>Streptomyces</taxon>
    </lineage>
</organism>